<protein>
    <recommendedName>
        <fullName evidence="1">Methylated-DNA--protein-cysteine methyltransferase</fullName>
        <ecNumber evidence="1">2.1.1.63</ecNumber>
    </recommendedName>
    <alternativeName>
        <fullName evidence="1">6-O-methylguanine-DNA methyltransferase</fullName>
        <shortName evidence="1">MGMT</shortName>
    </alternativeName>
    <alternativeName>
        <fullName evidence="1">O-6-methylguanine-DNA-alkyltransferase</fullName>
    </alternativeName>
</protein>
<evidence type="ECO:0000255" key="1">
    <source>
        <dbReference type="HAMAP-Rule" id="MF_00772"/>
    </source>
</evidence>
<evidence type="ECO:0000305" key="2"/>
<gene>
    <name evidence="1" type="primary">ogt</name>
    <name type="ordered locus">STM1659</name>
</gene>
<sequence length="171" mass="19008">MLRLLEEKIATPLGPLWVVCDEQFRLRAIEWEQYRDRMEQLLNIHYRHEGYERVSATNPGGLSDKLADYFAGNLAVIDTLETATGGTPFQREVWQALRAIPCGQVMHYGQLAAQLGRPGAARAVGAANGANPISIVVPCHRVIGRNGTLTGYAGGVQRKEWLLRHEGYLLL</sequence>
<comment type="function">
    <text evidence="1">Involved in the cellular defense against the biological effects of O6-methylguanine (O6-MeG) and O4-methylthymine (O4-MeT) in DNA. Repairs the methylated nucleobase in DNA by stoichiometrically transferring the methyl group to a cysteine residue in the enzyme. This is a suicide reaction: the enzyme is irreversibly inactivated.</text>
</comment>
<comment type="catalytic activity">
    <reaction evidence="1">
        <text>a 6-O-methyl-2'-deoxyguanosine in DNA + L-cysteinyl-[protein] = S-methyl-L-cysteinyl-[protein] + a 2'-deoxyguanosine in DNA</text>
        <dbReference type="Rhea" id="RHEA:24000"/>
        <dbReference type="Rhea" id="RHEA-COMP:10131"/>
        <dbReference type="Rhea" id="RHEA-COMP:10132"/>
        <dbReference type="Rhea" id="RHEA-COMP:11367"/>
        <dbReference type="Rhea" id="RHEA-COMP:11368"/>
        <dbReference type="ChEBI" id="CHEBI:29950"/>
        <dbReference type="ChEBI" id="CHEBI:82612"/>
        <dbReference type="ChEBI" id="CHEBI:85445"/>
        <dbReference type="ChEBI" id="CHEBI:85448"/>
        <dbReference type="EC" id="2.1.1.63"/>
    </reaction>
</comment>
<comment type="catalytic activity">
    <reaction evidence="1">
        <text>a 4-O-methyl-thymidine in DNA + L-cysteinyl-[protein] = a thymidine in DNA + S-methyl-L-cysteinyl-[protein]</text>
        <dbReference type="Rhea" id="RHEA:53428"/>
        <dbReference type="Rhea" id="RHEA-COMP:10131"/>
        <dbReference type="Rhea" id="RHEA-COMP:10132"/>
        <dbReference type="Rhea" id="RHEA-COMP:13555"/>
        <dbReference type="Rhea" id="RHEA-COMP:13556"/>
        <dbReference type="ChEBI" id="CHEBI:29950"/>
        <dbReference type="ChEBI" id="CHEBI:82612"/>
        <dbReference type="ChEBI" id="CHEBI:137386"/>
        <dbReference type="ChEBI" id="CHEBI:137387"/>
        <dbReference type="EC" id="2.1.1.63"/>
    </reaction>
</comment>
<comment type="subcellular location">
    <subcellularLocation>
        <location evidence="1">Cytoplasm</location>
    </subcellularLocation>
</comment>
<comment type="miscellaneous">
    <text>This enzyme catalyzes only one turnover and therefore is not strictly catalytic. According to one definition, an enzyme is a biocatalyst that acts repeatedly and over many reaction cycles.</text>
</comment>
<comment type="similarity">
    <text evidence="1">Belongs to the MGMT family.</text>
</comment>
<keyword id="KW-0963">Cytoplasm</keyword>
<keyword id="KW-0227">DNA damage</keyword>
<keyword id="KW-0234">DNA repair</keyword>
<keyword id="KW-0489">Methyltransferase</keyword>
<keyword id="KW-1185">Reference proteome</keyword>
<keyword id="KW-0808">Transferase</keyword>
<name>OGT_SALTY</name>
<dbReference type="EC" id="2.1.1.63" evidence="1"/>
<dbReference type="EMBL" id="U23465">
    <property type="protein sequence ID" value="AAC43323.1"/>
    <property type="molecule type" value="Genomic_DNA"/>
</dbReference>
<dbReference type="EMBL" id="AE006468">
    <property type="protein sequence ID" value="AAL20577.1"/>
    <property type="molecule type" value="Genomic_DNA"/>
</dbReference>
<dbReference type="EMBL" id="U05668">
    <property type="protein sequence ID" value="AAA16267.1"/>
    <property type="molecule type" value="Unassigned_DNA"/>
</dbReference>
<dbReference type="RefSeq" id="NP_460618.1">
    <property type="nucleotide sequence ID" value="NC_003197.2"/>
</dbReference>
<dbReference type="RefSeq" id="WP_000945036.1">
    <property type="nucleotide sequence ID" value="NC_003197.2"/>
</dbReference>
<dbReference type="SMR" id="P0A2U0"/>
<dbReference type="STRING" id="99287.STM1659"/>
<dbReference type="PaxDb" id="99287-STM1659"/>
<dbReference type="GeneID" id="1253177"/>
<dbReference type="KEGG" id="stm:STM1659"/>
<dbReference type="PATRIC" id="fig|99287.12.peg.1753"/>
<dbReference type="HOGENOM" id="CLU_000445_52_2_6"/>
<dbReference type="OMA" id="RCGNEKA"/>
<dbReference type="PhylomeDB" id="P0A2U0"/>
<dbReference type="BioCyc" id="SENT99287:STM1659-MONOMER"/>
<dbReference type="Proteomes" id="UP000001014">
    <property type="component" value="Chromosome"/>
</dbReference>
<dbReference type="GO" id="GO:0005737">
    <property type="term" value="C:cytoplasm"/>
    <property type="evidence" value="ECO:0007669"/>
    <property type="project" value="UniProtKB-SubCell"/>
</dbReference>
<dbReference type="GO" id="GO:0003908">
    <property type="term" value="F:methylated-DNA-[protein]-cysteine S-methyltransferase activity"/>
    <property type="evidence" value="ECO:0007669"/>
    <property type="project" value="UniProtKB-UniRule"/>
</dbReference>
<dbReference type="GO" id="GO:0006307">
    <property type="term" value="P:DNA alkylation repair"/>
    <property type="evidence" value="ECO:0007669"/>
    <property type="project" value="UniProtKB-UniRule"/>
</dbReference>
<dbReference type="GO" id="GO:0032259">
    <property type="term" value="P:methylation"/>
    <property type="evidence" value="ECO:0007669"/>
    <property type="project" value="UniProtKB-KW"/>
</dbReference>
<dbReference type="CDD" id="cd06445">
    <property type="entry name" value="ATase"/>
    <property type="match status" value="1"/>
</dbReference>
<dbReference type="FunFam" id="1.10.10.10:FF:000337">
    <property type="entry name" value="Methylated-DNA--protein-cysteine methyltransferase"/>
    <property type="match status" value="1"/>
</dbReference>
<dbReference type="Gene3D" id="1.10.10.10">
    <property type="entry name" value="Winged helix-like DNA-binding domain superfamily/Winged helix DNA-binding domain"/>
    <property type="match status" value="1"/>
</dbReference>
<dbReference type="HAMAP" id="MF_00772">
    <property type="entry name" value="OGT"/>
    <property type="match status" value="1"/>
</dbReference>
<dbReference type="InterPro" id="IPR001497">
    <property type="entry name" value="MethylDNA_cys_MeTrfase_AS"/>
</dbReference>
<dbReference type="InterPro" id="IPR014048">
    <property type="entry name" value="MethylDNA_cys_MeTrfase_DNA-bd"/>
</dbReference>
<dbReference type="InterPro" id="IPR036217">
    <property type="entry name" value="MethylDNA_cys_MeTrfase_DNAb"/>
</dbReference>
<dbReference type="InterPro" id="IPR008332">
    <property type="entry name" value="MethylG_MeTrfase_N"/>
</dbReference>
<dbReference type="InterPro" id="IPR023546">
    <property type="entry name" value="MGMT"/>
</dbReference>
<dbReference type="InterPro" id="IPR036631">
    <property type="entry name" value="MGMT_N_sf"/>
</dbReference>
<dbReference type="InterPro" id="IPR036388">
    <property type="entry name" value="WH-like_DNA-bd_sf"/>
</dbReference>
<dbReference type="NCBIfam" id="TIGR00589">
    <property type="entry name" value="ogt"/>
    <property type="match status" value="1"/>
</dbReference>
<dbReference type="NCBIfam" id="NF007626">
    <property type="entry name" value="PRK10286.1"/>
    <property type="match status" value="1"/>
</dbReference>
<dbReference type="PANTHER" id="PTHR10815">
    <property type="entry name" value="METHYLATED-DNA--PROTEIN-CYSTEINE METHYLTRANSFERASE"/>
    <property type="match status" value="1"/>
</dbReference>
<dbReference type="PANTHER" id="PTHR10815:SF5">
    <property type="entry name" value="METHYLATED-DNA--PROTEIN-CYSTEINE METHYLTRANSFERASE"/>
    <property type="match status" value="1"/>
</dbReference>
<dbReference type="Pfam" id="PF01035">
    <property type="entry name" value="DNA_binding_1"/>
    <property type="match status" value="1"/>
</dbReference>
<dbReference type="Pfam" id="PF02870">
    <property type="entry name" value="Methyltransf_1N"/>
    <property type="match status" value="1"/>
</dbReference>
<dbReference type="SUPFAM" id="SSF53155">
    <property type="entry name" value="Methylated DNA-protein cysteine methyltransferase domain"/>
    <property type="match status" value="1"/>
</dbReference>
<dbReference type="SUPFAM" id="SSF46767">
    <property type="entry name" value="Methylated DNA-protein cysteine methyltransferase, C-terminal domain"/>
    <property type="match status" value="1"/>
</dbReference>
<dbReference type="PROSITE" id="PS00374">
    <property type="entry name" value="MGMT"/>
    <property type="match status" value="1"/>
</dbReference>
<proteinExistence type="inferred from homology"/>
<reference key="1">
    <citation type="journal article" date="1995" name="J. Bacteriol.">
        <title>Construction and characterization of mutants of Salmonella typhimurium deficient in DNA repair of O6-methylguanine.</title>
        <authorList>
            <person name="Yamada M."/>
            <person name="Sedgwick B."/>
            <person name="Sofuni T."/>
            <person name="Nohmi T."/>
        </authorList>
    </citation>
    <scope>NUCLEOTIDE SEQUENCE [GENOMIC DNA]</scope>
    <source>
        <strain>ATCC 29631 / TA 1538</strain>
    </source>
</reference>
<reference key="2">
    <citation type="journal article" date="2001" name="Nature">
        <title>Complete genome sequence of Salmonella enterica serovar Typhimurium LT2.</title>
        <authorList>
            <person name="McClelland M."/>
            <person name="Sanderson K.E."/>
            <person name="Spieth J."/>
            <person name="Clifton S.W."/>
            <person name="Latreille P."/>
            <person name="Courtney L."/>
            <person name="Porwollik S."/>
            <person name="Ali J."/>
            <person name="Dante M."/>
            <person name="Du F."/>
            <person name="Hou S."/>
            <person name="Layman D."/>
            <person name="Leonard S."/>
            <person name="Nguyen C."/>
            <person name="Scott K."/>
            <person name="Holmes A."/>
            <person name="Grewal N."/>
            <person name="Mulvaney E."/>
            <person name="Ryan E."/>
            <person name="Sun H."/>
            <person name="Florea L."/>
            <person name="Miller W."/>
            <person name="Stoneking T."/>
            <person name="Nhan M."/>
            <person name="Waterston R."/>
            <person name="Wilson R.K."/>
        </authorList>
    </citation>
    <scope>NUCLEOTIDE SEQUENCE [LARGE SCALE GENOMIC DNA]</scope>
    <source>
        <strain>LT2 / SGSC1412 / ATCC 700720</strain>
    </source>
</reference>
<reference key="3">
    <citation type="submission" date="1994-01" db="EMBL/GenBank/DDBJ databases">
        <authorList>
            <person name="Lee A.A."/>
            <person name="Miller C.G."/>
            <person name="Lombardo M."/>
        </authorList>
    </citation>
    <scope>NUCLEOTIDE SEQUENCE [GENOMIC DNA] OF 57-171</scope>
</reference>
<accession>P0A2U0</accession>
<accession>P37429</accession>
<accession>Q56015</accession>
<organism>
    <name type="scientific">Salmonella typhimurium (strain LT2 / SGSC1412 / ATCC 700720)</name>
    <dbReference type="NCBI Taxonomy" id="99287"/>
    <lineage>
        <taxon>Bacteria</taxon>
        <taxon>Pseudomonadati</taxon>
        <taxon>Pseudomonadota</taxon>
        <taxon>Gammaproteobacteria</taxon>
        <taxon>Enterobacterales</taxon>
        <taxon>Enterobacteriaceae</taxon>
        <taxon>Salmonella</taxon>
    </lineage>
</organism>
<feature type="chain" id="PRO_0000139372" description="Methylated-DNA--protein-cysteine methyltransferase">
    <location>
        <begin position="1"/>
        <end position="171"/>
    </location>
</feature>
<feature type="active site" description="Nucleophile; methyl group acceptor" evidence="1">
    <location>
        <position position="139"/>
    </location>
</feature>
<feature type="sequence conflict" description="In Ref. 3; AAA16267." evidence="2" ref="3">
    <original>QVMHYGQLAAQLGRPGAA</original>
    <variation>RSCTMVNWRRNWDDRAVR</variation>
    <location>
        <begin position="104"/>
        <end position="121"/>
    </location>
</feature>
<feature type="sequence conflict" description="In Ref. 3; AAA16267." evidence="2" ref="3">
    <original>NG</original>
    <variation>KR</variation>
    <location>
        <begin position="146"/>
        <end position="147"/>
    </location>
</feature>